<comment type="function">
    <text evidence="2 3 4 5 9 13">Voltage-sensitive motor protein that drives outer hair cell (OHC) electromotility (eM) and participates in sound amplification in the hearing organ (PubMed:12239568). Converts changes in the transmembrane electric potential into mechanical displacements resulting in the coupling of its expansion to movement of a charged voltage sensor across the lipid membrane (PubMed:12239568). The nature of the voltage sensor is not completely clear, and two models compete (By similarity). In the first model, acts as an incomplete transporter where intracellular chloride anion acts as extrinsic voltage sensor that drives conformational change in the protein which is sufficient to produce a length change in the plane of the membrane and hence in the length of the OHC (By similarity). The second model in which multiple charged amino acid residues are distributed at the intracellular and extracellular membrane interfaces that form an intrinsic voltage sensor, whose movement produces the non-linear capacitance (NLC) (By similarity). However, the effective voltage sensor may be the result of a hybrid voltage sensor, assembled from intrinsic charge (charged residues) and extrinsic charge (bound anion) (By similarity). Notably, binding of anions to the anion-binding pocket partially neutralizes the intrinsic positive charge rather than to form an electrically negative sensor, therefore remaining charge may serve as voltage sensor that, after depolarization, moves from down (expanded state) to up (contracted) conformation, which is accompanied by an eccentric contraction of the intermembrane cross-sectional area of the protein as well as a major increase in the hydrophobic thickness of the protein having as consequences the plasma membrane thickening and the cell contraction after membrane depolarization (By similarity). The anion-binding pocket transits from the inward-open (Down) state, where it is exposed toward the intracellular solvent in the absence of anion, to the occluded (Up) state upon anion binding (By similarity). Salicylate competes for the anion-binding site and inhibits the voltage-sensor movement, and therefore inhibits the charge transfer and electromotility by displacing Cl(-) from the anion-binding site and by preventing the structural transitions to the contracted state (By similarity). In addition, can act as a weak Cl(-)/HCO3(-) antiporter across the cell membrane and so regulate the intracellular pH of the outer hair cells (OHCs), while firstly found as being unable to mediate electrogenic anion transport (By similarity). Moreover, supports a role in cardiac mechanical amplification serving as an elastic element to enhance the actomyosin- based sarcomere contraction system (PubMed:33951436).</text>
</comment>
<comment type="catalytic activity">
    <reaction evidence="4">
        <text>2 hydrogencarbonate(in) + chloride(out) = 2 hydrogencarbonate(out) + chloride(in)</text>
        <dbReference type="Rhea" id="RHEA:72207"/>
        <dbReference type="ChEBI" id="CHEBI:17544"/>
        <dbReference type="ChEBI" id="CHEBI:17996"/>
    </reaction>
</comment>
<comment type="subunit">
    <text evidence="1 3 4">Homodimer (By similarity). Interacts (via STAS domain) with CALM; this interaction is calcium-dependent and the STAS domain interacts with only one lobe of CALM which is an elongated conformation (By similarity). Interacts with MYH1 (By similarity).</text>
</comment>
<comment type="subcellular location">
    <subcellularLocation>
        <location evidence="10 12">Lateral cell membrane</location>
        <topology evidence="3">Multi-pass membrane protein</topology>
    </subcellularLocation>
    <text evidence="3 10 12">Localized at the outer hair cells (OHC) lateral plasma membrane (PubMed:12584604, PubMed:14553901). Alters profoundly the shape of its surrounding lipid bilayer (By similarity).</text>
</comment>
<comment type="tissue specificity">
    <text evidence="10 11 12 13">Expressed in the outer hair cells (OHC) of the organ of Corti of the inner ear (PubMed:12584604, PubMed:12782792, PubMed:14553901). Also weak expression in brain and testis (PubMed:12584604). Very weakly expressed in heart, spleen, muscle and lactating mammary glands (PubMed:12584604). Expressed in cardiac myocytes (at protein level), both in the surface sarcolemma and along the t-tubule (PubMed:33951436). Weakly expressed in skeletal muscle cells (at protein level) (PubMed:33951436).</text>
</comment>
<comment type="domain">
    <text evidence="2 3 4">The STAS domain mediates dimerization, with both STAS domains latched onto each other in a domain-swapped manner. The N-terminus domain is involved in dimerization such that each N-terminus domain embraces both STAS domains (By similarity). The STAS domain harbors a unique anion-binding site important for the fine regulation of the high-frequency electromotile properties (By similarity). The transmembrane domain consists of 14 transmembrane segments organized in a 7(+)7 inverted repeat architecture that can be divided into two main helix bundles, the ''core'' domain and the ''gate'' domain (By similarity). The transmembrane regions are domain-swapped with the STAS domain containing N- and C-terminal cytoplasmic domains (By similarity). The STAS domain mediates CALM binding CALM (By similarity).</text>
</comment>
<comment type="disruption phenotype">
    <text evidence="9">Homozygous knockout mice lacking Slc26a5 have no obvious developmental or behavioral abnormalities, except that, at one month, mice show small size difference compared to wild-type (PubMed:12239568). Mice show loss of electromotility, shortened outer hair cells (OHCs), and a reduction of hearing sensitivity of 40-60 dB (PubMed:12239568).</text>
</comment>
<comment type="similarity">
    <text evidence="15">Belongs to the SLC26A/SulP transporter (TC 2.A.53) family.</text>
</comment>
<comment type="online information" name="Protein Spotlight">
    <link uri="https://www.proteinspotlight.org/back_issues/022"/>
    <text>Pump up the volume - Issue 22 of May 2002</text>
</comment>
<organism>
    <name type="scientific">Mus musculus</name>
    <name type="common">Mouse</name>
    <dbReference type="NCBI Taxonomy" id="10090"/>
    <lineage>
        <taxon>Eukaryota</taxon>
        <taxon>Metazoa</taxon>
        <taxon>Chordata</taxon>
        <taxon>Craniata</taxon>
        <taxon>Vertebrata</taxon>
        <taxon>Euteleostomi</taxon>
        <taxon>Mammalia</taxon>
        <taxon>Eutheria</taxon>
        <taxon>Euarchontoglires</taxon>
        <taxon>Glires</taxon>
        <taxon>Rodentia</taxon>
        <taxon>Myomorpha</taxon>
        <taxon>Muroidea</taxon>
        <taxon>Muridae</taxon>
        <taxon>Murinae</taxon>
        <taxon>Mus</taxon>
        <taxon>Mus</taxon>
    </lineage>
</organism>
<protein>
    <recommendedName>
        <fullName evidence="14">Prestin</fullName>
    </recommendedName>
    <alternativeName>
        <fullName>Solute carrier family 26 member 5</fullName>
    </alternativeName>
</protein>
<accession>Q99NH7</accession>
<accession>Q80ZB1</accession>
<keyword id="KW-1003">Cell membrane</keyword>
<keyword id="KW-0133">Cell shape</keyword>
<keyword id="KW-0325">Glycoprotein</keyword>
<keyword id="KW-1009">Hearing</keyword>
<keyword id="KW-0472">Membrane</keyword>
<keyword id="KW-0505">Motor protein</keyword>
<keyword id="KW-1185">Reference proteome</keyword>
<keyword id="KW-0812">Transmembrane</keyword>
<keyword id="KW-1133">Transmembrane helix</keyword>
<proteinExistence type="evidence at protein level"/>
<feature type="chain" id="PRO_0000080169" description="Prestin">
    <location>
        <begin position="1"/>
        <end position="744"/>
    </location>
</feature>
<feature type="topological domain" description="Cytoplasmic" evidence="15">
    <location>
        <begin position="1"/>
        <end position="75"/>
    </location>
</feature>
<feature type="transmembrane region" description="Helical; Name=1" evidence="3">
    <location>
        <begin position="76"/>
        <end position="105"/>
    </location>
</feature>
<feature type="topological domain" description="Extracellular" evidence="15">
    <location>
        <begin position="106"/>
        <end position="108"/>
    </location>
</feature>
<feature type="transmembrane region" description="Helical; Name=2" evidence="3">
    <location>
        <begin position="109"/>
        <end position="126"/>
    </location>
</feature>
<feature type="topological domain" description="Cytoplasmic" evidence="15">
    <location>
        <begin position="127"/>
        <end position="137"/>
    </location>
</feature>
<feature type="transmembrane region" description="Helical; Name=3" evidence="3">
    <location>
        <begin position="138"/>
        <end position="151"/>
    </location>
</feature>
<feature type="topological domain" description="Extracellular" evidence="15">
    <location>
        <begin position="152"/>
        <end position="168"/>
    </location>
</feature>
<feature type="transmembrane region" description="Helical; Name=4" evidence="3">
    <location>
        <begin position="169"/>
        <end position="196"/>
    </location>
</feature>
<feature type="topological domain" description="Cytoplasmic" evidence="15">
    <location>
        <begin position="197"/>
        <end position="206"/>
    </location>
</feature>
<feature type="transmembrane region" description="Helical; Name=5a" evidence="3">
    <location>
        <begin position="207"/>
        <end position="230"/>
    </location>
</feature>
<feature type="topological domain" description="Extracellular" evidence="15">
    <location>
        <begin position="231"/>
        <end position="241"/>
    </location>
</feature>
<feature type="intramembrane region" description="Helical; Name=5b" evidence="3">
    <location>
        <begin position="242"/>
        <end position="253"/>
    </location>
</feature>
<feature type="topological domain" description="Extracellular" evidence="15">
    <location>
        <begin position="254"/>
        <end position="258"/>
    </location>
</feature>
<feature type="transmembrane region" description="Helical; Name=6" evidence="3">
    <location>
        <begin position="259"/>
        <end position="282"/>
    </location>
</feature>
<feature type="topological domain" description="Cytoplasmic" evidence="15">
    <location>
        <begin position="283"/>
        <end position="291"/>
    </location>
</feature>
<feature type="transmembrane region" description="Helical; Name=7" evidence="3">
    <location>
        <begin position="292"/>
        <end position="307"/>
    </location>
</feature>
<feature type="topological domain" description="Extracellular" evidence="15">
    <location>
        <begin position="308"/>
        <end position="332"/>
    </location>
</feature>
<feature type="transmembrane region" description="Helical; Name=8" evidence="3">
    <location>
        <begin position="333"/>
        <end position="367"/>
    </location>
</feature>
<feature type="topological domain" description="Cytoplasmic" evidence="15">
    <location>
        <begin position="368"/>
        <end position="370"/>
    </location>
</feature>
<feature type="transmembrane region" description="Helical; Name=9" evidence="3">
    <location>
        <begin position="371"/>
        <end position="388"/>
    </location>
</feature>
<feature type="topological domain" description="Extracellular" evidence="15">
    <location>
        <begin position="389"/>
        <end position="396"/>
    </location>
</feature>
<feature type="transmembrane region" description="Helical; Name=10" evidence="3">
    <location>
        <begin position="397"/>
        <end position="406"/>
    </location>
</feature>
<feature type="topological domain" description="Cytoplasmic" evidence="15">
    <location>
        <begin position="407"/>
        <end position="410"/>
    </location>
</feature>
<feature type="transmembrane region" description="Helical; Name=11" evidence="3">
    <location>
        <begin position="411"/>
        <end position="432"/>
    </location>
</feature>
<feature type="topological domain" description="Extracellular" evidence="15">
    <location>
        <begin position="433"/>
        <end position="436"/>
    </location>
</feature>
<feature type="transmembrane region" description="Helical; Name=12" evidence="3">
    <location>
        <begin position="437"/>
        <end position="464"/>
    </location>
</feature>
<feature type="topological domain" description="Cytoplasmic" evidence="15">
    <location>
        <position position="465"/>
    </location>
</feature>
<feature type="transmembrane region" description="Helical; Name=13" evidence="3">
    <location>
        <begin position="466"/>
        <end position="481"/>
    </location>
</feature>
<feature type="topological domain" description="Extracellular" evidence="15">
    <location>
        <begin position="482"/>
        <end position="483"/>
    </location>
</feature>
<feature type="transmembrane region" description="Helical; Name=14" evidence="3">
    <location>
        <begin position="484"/>
        <end position="504"/>
    </location>
</feature>
<feature type="topological domain" description="Cytoplasmic" evidence="15">
    <location>
        <begin position="505"/>
        <end position="744"/>
    </location>
</feature>
<feature type="domain" description="STAS" evidence="7">
    <location>
        <begin position="525"/>
        <end position="713"/>
    </location>
</feature>
<feature type="region of interest" description="Extended region for STAS domain" evidence="4">
    <location>
        <begin position="505"/>
        <end position="718"/>
    </location>
</feature>
<feature type="region of interest" description="Disordered" evidence="8">
    <location>
        <begin position="720"/>
        <end position="744"/>
    </location>
</feature>
<feature type="short sequence motif" description="Involved in motor function" evidence="5">
    <location>
        <begin position="158"/>
        <end position="168"/>
    </location>
</feature>
<feature type="binding site" evidence="3">
    <location>
        <position position="398"/>
    </location>
    <ligand>
        <name>salicylate</name>
        <dbReference type="ChEBI" id="CHEBI:30762"/>
        <note>antagonist</note>
    </ligand>
</feature>
<feature type="site" description="Controls the electromotile activity" evidence="1 4">
    <location>
        <position position="398"/>
    </location>
</feature>
<feature type="site" description="Contributes to anion binding" evidence="4">
    <location>
        <position position="399"/>
    </location>
</feature>
<feature type="glycosylation site" description="N-linked (GlcNAc...) asparagine" evidence="6">
    <location>
        <position position="163"/>
    </location>
</feature>
<feature type="glycosylation site" description="N-linked (GlcNAc...) asparagine" evidence="6">
    <location>
        <position position="166"/>
    </location>
</feature>
<feature type="sequence conflict" description="In Ref. 1; AAG59999." evidence="15" ref="1">
    <original>L</original>
    <variation>P</variation>
    <location>
        <position position="469"/>
    </location>
</feature>
<evidence type="ECO:0000250" key="1">
    <source>
        <dbReference type="UniProtKB" id="A0FKN5"/>
    </source>
</evidence>
<evidence type="ECO:0000250" key="2">
    <source>
        <dbReference type="UniProtKB" id="D7PC76"/>
    </source>
</evidence>
<evidence type="ECO:0000250" key="3">
    <source>
        <dbReference type="UniProtKB" id="P58743"/>
    </source>
</evidence>
<evidence type="ECO:0000250" key="4">
    <source>
        <dbReference type="UniProtKB" id="Q9EPH0"/>
    </source>
</evidence>
<evidence type="ECO:0000250" key="5">
    <source>
        <dbReference type="UniProtKB" id="Q9JKQ2"/>
    </source>
</evidence>
<evidence type="ECO:0000255" key="6"/>
<evidence type="ECO:0000255" key="7">
    <source>
        <dbReference type="PROSITE-ProRule" id="PRU00198"/>
    </source>
</evidence>
<evidence type="ECO:0000256" key="8">
    <source>
        <dbReference type="SAM" id="MobiDB-lite"/>
    </source>
</evidence>
<evidence type="ECO:0000269" key="9">
    <source>
    </source>
</evidence>
<evidence type="ECO:0000269" key="10">
    <source>
    </source>
</evidence>
<evidence type="ECO:0000269" key="11">
    <source>
    </source>
</evidence>
<evidence type="ECO:0000269" key="12">
    <source>
    </source>
</evidence>
<evidence type="ECO:0000269" key="13">
    <source>
    </source>
</evidence>
<evidence type="ECO:0000303" key="14">
    <source>
    </source>
</evidence>
<evidence type="ECO:0000305" key="15"/>
<evidence type="ECO:0000312" key="16">
    <source>
        <dbReference type="MGI" id="MGI:1933154"/>
    </source>
</evidence>
<dbReference type="EMBL" id="AY024359">
    <property type="protein sequence ID" value="AAG59999.2"/>
    <property type="molecule type" value="mRNA"/>
</dbReference>
<dbReference type="EMBL" id="AF529192">
    <property type="protein sequence ID" value="AAO59381.1"/>
    <property type="molecule type" value="mRNA"/>
</dbReference>
<dbReference type="EMBL" id="CH466586">
    <property type="protein sequence ID" value="EDL03187.1"/>
    <property type="molecule type" value="Genomic_DNA"/>
</dbReference>
<dbReference type="CCDS" id="CCDS19109.1"/>
<dbReference type="RefSeq" id="NP_001276716.1">
    <property type="nucleotide sequence ID" value="NM_001289787.1"/>
</dbReference>
<dbReference type="RefSeq" id="NP_001276717.1">
    <property type="nucleotide sequence ID" value="NM_001289788.1"/>
</dbReference>
<dbReference type="RefSeq" id="NP_109652.3">
    <property type="nucleotide sequence ID" value="NM_030727.5"/>
</dbReference>
<dbReference type="SMR" id="Q99NH7"/>
<dbReference type="FunCoup" id="Q99NH7">
    <property type="interactions" value="94"/>
</dbReference>
<dbReference type="STRING" id="10090.ENSMUSP00000030878"/>
<dbReference type="TCDB" id="2.A.53.2.5">
    <property type="family name" value="the sulfate permease (sulp) family"/>
</dbReference>
<dbReference type="GlyCosmos" id="Q99NH7">
    <property type="glycosylation" value="2 sites, No reported glycans"/>
</dbReference>
<dbReference type="GlyGen" id="Q99NH7">
    <property type="glycosylation" value="2 sites"/>
</dbReference>
<dbReference type="iPTMnet" id="Q99NH7"/>
<dbReference type="PhosphoSitePlus" id="Q99NH7"/>
<dbReference type="PaxDb" id="10090-ENSMUSP00000030878"/>
<dbReference type="Antibodypedia" id="31198">
    <property type="antibodies" value="132 antibodies from 26 providers"/>
</dbReference>
<dbReference type="DNASU" id="80979"/>
<dbReference type="Ensembl" id="ENSMUST00000030878.8">
    <property type="protein sequence ID" value="ENSMUSP00000030878.2"/>
    <property type="gene ID" value="ENSMUSG00000029015.10"/>
</dbReference>
<dbReference type="GeneID" id="80979"/>
<dbReference type="KEGG" id="mmu:80979"/>
<dbReference type="UCSC" id="uc008wpe.2">
    <property type="organism name" value="mouse"/>
</dbReference>
<dbReference type="AGR" id="MGI:1933154"/>
<dbReference type="CTD" id="375611"/>
<dbReference type="MGI" id="MGI:1933154">
    <property type="gene designation" value="Slc26a5"/>
</dbReference>
<dbReference type="VEuPathDB" id="HostDB:ENSMUSG00000029015"/>
<dbReference type="eggNOG" id="KOG0236">
    <property type="taxonomic scope" value="Eukaryota"/>
</dbReference>
<dbReference type="GeneTree" id="ENSGT01070000253775"/>
<dbReference type="HOGENOM" id="CLU_003182_9_4_1"/>
<dbReference type="InParanoid" id="Q99NH7"/>
<dbReference type="OMA" id="YKDAQRV"/>
<dbReference type="OrthoDB" id="288203at2759"/>
<dbReference type="PhylomeDB" id="Q99NH7"/>
<dbReference type="TreeFam" id="TF313784"/>
<dbReference type="BioGRID-ORCS" id="80979">
    <property type="hits" value="3 hits in 76 CRISPR screens"/>
</dbReference>
<dbReference type="PRO" id="PR:Q99NH7"/>
<dbReference type="Proteomes" id="UP000000589">
    <property type="component" value="Chromosome 5"/>
</dbReference>
<dbReference type="RNAct" id="Q99NH7">
    <property type="molecule type" value="protein"/>
</dbReference>
<dbReference type="Bgee" id="ENSMUSG00000029015">
    <property type="expression patterns" value="Expressed in animal zygote and 12 other cell types or tissues"/>
</dbReference>
<dbReference type="ExpressionAtlas" id="Q99NH7">
    <property type="expression patterns" value="baseline and differential"/>
</dbReference>
<dbReference type="GO" id="GO:0016323">
    <property type="term" value="C:basolateral plasma membrane"/>
    <property type="evidence" value="ECO:0000314"/>
    <property type="project" value="MGI"/>
</dbReference>
<dbReference type="GO" id="GO:0016328">
    <property type="term" value="C:lateral plasma membrane"/>
    <property type="evidence" value="ECO:0000314"/>
    <property type="project" value="MGI"/>
</dbReference>
<dbReference type="GO" id="GO:0120249">
    <property type="term" value="C:lateral wall of outer hair cell"/>
    <property type="evidence" value="ECO:0000314"/>
    <property type="project" value="MGI"/>
</dbReference>
<dbReference type="GO" id="GO:0005886">
    <property type="term" value="C:plasma membrane"/>
    <property type="evidence" value="ECO:0000314"/>
    <property type="project" value="MGI"/>
</dbReference>
<dbReference type="GO" id="GO:0140900">
    <property type="term" value="F:chloride:bicarbonate antiporter activity"/>
    <property type="evidence" value="ECO:0000250"/>
    <property type="project" value="UniProtKB"/>
</dbReference>
<dbReference type="GO" id="GO:0042803">
    <property type="term" value="F:protein homodimerization activity"/>
    <property type="evidence" value="ECO:0000250"/>
    <property type="project" value="UniProtKB"/>
</dbReference>
<dbReference type="GO" id="GO:0008271">
    <property type="term" value="F:secondary active sulfate transmembrane transporter activity"/>
    <property type="evidence" value="ECO:0007669"/>
    <property type="project" value="InterPro"/>
</dbReference>
<dbReference type="GO" id="GO:0030507">
    <property type="term" value="F:spectrin binding"/>
    <property type="evidence" value="ECO:0000314"/>
    <property type="project" value="MGI"/>
</dbReference>
<dbReference type="GO" id="GO:0015701">
    <property type="term" value="P:bicarbonate transport"/>
    <property type="evidence" value="ECO:0000250"/>
    <property type="project" value="UniProtKB"/>
</dbReference>
<dbReference type="GO" id="GO:0006821">
    <property type="term" value="P:chloride transport"/>
    <property type="evidence" value="ECO:0000250"/>
    <property type="project" value="UniProtKB"/>
</dbReference>
<dbReference type="GO" id="GO:0090102">
    <property type="term" value="P:cochlea development"/>
    <property type="evidence" value="ECO:0007669"/>
    <property type="project" value="Ensembl"/>
</dbReference>
<dbReference type="GO" id="GO:0015755">
    <property type="term" value="P:fructose transmembrane transport"/>
    <property type="evidence" value="ECO:0007669"/>
    <property type="project" value="Ensembl"/>
</dbReference>
<dbReference type="GO" id="GO:0034766">
    <property type="term" value="P:negative regulation of monoatomic ion transmembrane transport"/>
    <property type="evidence" value="ECO:0007669"/>
    <property type="project" value="Ensembl"/>
</dbReference>
<dbReference type="GO" id="GO:0019532">
    <property type="term" value="P:oxalate transport"/>
    <property type="evidence" value="ECO:0007669"/>
    <property type="project" value="Ensembl"/>
</dbReference>
<dbReference type="GO" id="GO:2000147">
    <property type="term" value="P:positive regulation of cell motility"/>
    <property type="evidence" value="ECO:0007669"/>
    <property type="project" value="Ensembl"/>
</dbReference>
<dbReference type="GO" id="GO:0045793">
    <property type="term" value="P:positive regulation of cell size"/>
    <property type="evidence" value="ECO:0007669"/>
    <property type="project" value="Ensembl"/>
</dbReference>
<dbReference type="GO" id="GO:0008360">
    <property type="term" value="P:regulation of cell shape"/>
    <property type="evidence" value="ECO:0007669"/>
    <property type="project" value="UniProtKB-KW"/>
</dbReference>
<dbReference type="GO" id="GO:0042391">
    <property type="term" value="P:regulation of membrane potential"/>
    <property type="evidence" value="ECO:0000314"/>
    <property type="project" value="MGI"/>
</dbReference>
<dbReference type="GO" id="GO:0010996">
    <property type="term" value="P:response to auditory stimulus"/>
    <property type="evidence" value="ECO:0007669"/>
    <property type="project" value="Ensembl"/>
</dbReference>
<dbReference type="GO" id="GO:0002931">
    <property type="term" value="P:response to ischemia"/>
    <property type="evidence" value="ECO:0007669"/>
    <property type="project" value="Ensembl"/>
</dbReference>
<dbReference type="GO" id="GO:0035864">
    <property type="term" value="P:response to potassium ion"/>
    <property type="evidence" value="ECO:0007669"/>
    <property type="project" value="Ensembl"/>
</dbReference>
<dbReference type="GO" id="GO:0009751">
    <property type="term" value="P:response to salicylic acid"/>
    <property type="evidence" value="ECO:0007669"/>
    <property type="project" value="Ensembl"/>
</dbReference>
<dbReference type="GO" id="GO:1902074">
    <property type="term" value="P:response to salt"/>
    <property type="evidence" value="ECO:0007669"/>
    <property type="project" value="Ensembl"/>
</dbReference>
<dbReference type="GO" id="GO:0097066">
    <property type="term" value="P:response to thyroid hormone"/>
    <property type="evidence" value="ECO:0007669"/>
    <property type="project" value="Ensembl"/>
</dbReference>
<dbReference type="GO" id="GO:0009410">
    <property type="term" value="P:response to xenobiotic stimulus"/>
    <property type="evidence" value="ECO:0007669"/>
    <property type="project" value="Ensembl"/>
</dbReference>
<dbReference type="GO" id="GO:0007605">
    <property type="term" value="P:sensory perception of sound"/>
    <property type="evidence" value="ECO:0007669"/>
    <property type="project" value="UniProtKB-KW"/>
</dbReference>
<dbReference type="CDD" id="cd07043">
    <property type="entry name" value="STAS_anti-anti-sigma_factors"/>
    <property type="match status" value="1"/>
</dbReference>
<dbReference type="CDD" id="cd07042">
    <property type="entry name" value="STAS_SulP_like_sulfate_transporter"/>
    <property type="match status" value="1"/>
</dbReference>
<dbReference type="Gene3D" id="3.30.750.24">
    <property type="entry name" value="STAS domain"/>
    <property type="match status" value="1"/>
</dbReference>
<dbReference type="InterPro" id="IPR018045">
    <property type="entry name" value="S04_transporter_CS"/>
</dbReference>
<dbReference type="InterPro" id="IPR011547">
    <property type="entry name" value="SLC26A/SulP_dom"/>
</dbReference>
<dbReference type="InterPro" id="IPR001902">
    <property type="entry name" value="SLC26A/SulP_fam"/>
</dbReference>
<dbReference type="InterPro" id="IPR002645">
    <property type="entry name" value="STAS_dom"/>
</dbReference>
<dbReference type="InterPro" id="IPR036513">
    <property type="entry name" value="STAS_dom_sf"/>
</dbReference>
<dbReference type="NCBIfam" id="TIGR00815">
    <property type="entry name" value="sulP"/>
    <property type="match status" value="1"/>
</dbReference>
<dbReference type="PANTHER" id="PTHR11814">
    <property type="entry name" value="SULFATE TRANSPORTER"/>
    <property type="match status" value="1"/>
</dbReference>
<dbReference type="Pfam" id="PF01740">
    <property type="entry name" value="STAS"/>
    <property type="match status" value="1"/>
</dbReference>
<dbReference type="Pfam" id="PF00916">
    <property type="entry name" value="Sulfate_transp"/>
    <property type="match status" value="1"/>
</dbReference>
<dbReference type="SUPFAM" id="SSF52091">
    <property type="entry name" value="SpoIIaa-like"/>
    <property type="match status" value="1"/>
</dbReference>
<dbReference type="PROSITE" id="PS01130">
    <property type="entry name" value="SLC26A"/>
    <property type="match status" value="1"/>
</dbReference>
<dbReference type="PROSITE" id="PS50801">
    <property type="entry name" value="STAS"/>
    <property type="match status" value="1"/>
</dbReference>
<name>S26A5_MOUSE</name>
<reference key="1">
    <citation type="journal article" date="2003" name="Hear. Res.">
        <title>Expression of prestin, a membrane motor protein, in the mammalian auditory and vestibular periphery.</title>
        <authorList>
            <person name="Dougherty G.W."/>
            <person name="Kachar B."/>
        </authorList>
    </citation>
    <scope>NUCLEOTIDE SEQUENCE [MRNA]</scope>
    <scope>SUBCELLULAR LOCATION</scope>
    <scope>TISSUE SPECIFICITY</scope>
    <source>
        <strain>C57BL/6J</strain>
        <tissue>Organ of Corti</tissue>
    </source>
</reference>
<reference key="2">
    <citation type="journal article" date="2003" name="Mamm. Genome">
        <title>Genomic characterization and expression of mouse prestin, the motor protein of outer hair cells.</title>
        <authorList>
            <person name="Zheng J."/>
            <person name="Long K.B."/>
            <person name="Matsuda K."/>
            <person name="Madison L.D."/>
            <person name="Ryan A."/>
            <person name="Dallos P.D."/>
        </authorList>
    </citation>
    <scope>NUCLEOTIDE SEQUENCE [MRNA]</scope>
    <scope>SUBCELLULAR LOCATION</scope>
    <scope>TISSUE SPECIFICITY</scope>
    <source>
        <strain>CBA/CaJ</strain>
    </source>
</reference>
<reference key="3">
    <citation type="submission" date="2005-07" db="EMBL/GenBank/DDBJ databases">
        <authorList>
            <person name="Mural R.J."/>
            <person name="Adams M.D."/>
            <person name="Myers E.W."/>
            <person name="Smith H.O."/>
            <person name="Venter J.C."/>
        </authorList>
    </citation>
    <scope>NUCLEOTIDE SEQUENCE [LARGE SCALE GENOMIC DNA]</scope>
</reference>
<reference key="4">
    <citation type="journal article" date="2002" name="Nature">
        <title>Prestin is required for electromotility of the outer hair cell and for the cochlear amplifier.</title>
        <authorList>
            <person name="Liberman M.C."/>
            <person name="Gao J."/>
            <person name="He D.Z."/>
            <person name="Wu X."/>
            <person name="Jia S."/>
            <person name="Zuo J."/>
        </authorList>
    </citation>
    <scope>FUNCTION</scope>
    <scope>DISRUPTION PHENOTYPE</scope>
</reference>
<reference key="5">
    <citation type="journal article" date="2003" name="Proc. Natl. Acad. Sci. U.S.A.">
        <title>Expression of prestin-homologous solute carrier (SLC26) in auditory organs of nonmammalian vertebrates and insects.</title>
        <authorList>
            <person name="Weber T."/>
            <person name="Gopfert M.C."/>
            <person name="Winter H."/>
            <person name="Zimmermann U."/>
            <person name="Kohler H."/>
            <person name="Meier A."/>
            <person name="Hendrich O."/>
            <person name="Rohbock K."/>
            <person name="Robert D."/>
            <person name="Knipper M."/>
        </authorList>
    </citation>
    <scope>TISSUE SPECIFICITY</scope>
</reference>
<reference key="6">
    <citation type="journal article" date="2021" name="Cell Rep.">
        <title>Prestin amplifies cardiac motor functions.</title>
        <authorList>
            <person name="Zhang X.D."/>
            <person name="Thai P.N."/>
            <person name="Ren L."/>
            <person name="Perez Flores M.C."/>
            <person name="Ledford H.A."/>
            <person name="Park S."/>
            <person name="Lee J.H."/>
            <person name="Sihn C.R."/>
            <person name="Chang C.W."/>
            <person name="Chen W.C."/>
            <person name="Timofeyev V."/>
            <person name="Zuo J."/>
            <person name="Chan J.W."/>
            <person name="Yamoah E.N."/>
            <person name="Chiamvimonvat N."/>
        </authorList>
    </citation>
    <scope>FUNCTION</scope>
    <scope>TISSUE SPECIFICITY</scope>
</reference>
<sequence>MDHAEENEIPAETQRYYVERPIFSHPVLQERLHVKDKVTESIGDKLKQAFTCTPKKIRNIIYMFLPITKWLPAYKFKEYVLGDLVSGISTGVLQLPQGLAFAMLAAVPPVFGLYSSFYPVIMYCFFGTSRHISIGPFAVISLMIGGVAVRLVPDDIVIPGGVNATNGTEARDALRVKVAMSVTLLSGIIQFCLGVCRFGFVAIYLTEPLVRGFTTAAAVHVFTSMLKYLFGVKTKRYSGIFSVVYSTVAVLQNVKNLNVCSLGVGLMVFGLLLGGKEFNERFKEKLPAPIPLEFFAVVMGTGISAGFNLHESYSVDVVGTLPLGLLPPANPDTSLFHLVYVDAIAIAIVGFSVTISMAKTLANKHGYQVDGNQELIALGICNSIGSLFQTFSISCSLSRSLVQEGTGGKTQLAGCLASLMILLVILATGFLFESLPQAVLSAIVIVNLKGMFMQFSDLPFFWRTSKIELTIWLTTFVSSLFLGLDYGLITAVIIALLTVIYRTQSPSYKVLGQLPDTDVYIDIDAYEEVKEIPGIKIFQINAPIYYANSDLYSSALKRKTGVNPALIMGARRKAMRKYAKEVGNANVANATVVKVDAEVDGENATKPEEEDDEVKFPPIVIKTTFPEELQRFLPQGENVHTVILDFTQVNFVDSVGVKTLAGIVKEYGDVGIYVYLAGCSPQVVNDLTRNNFFENPALKELLFHSIHDAVLGSQVREAMAEQEATASLPQEDMEPNATPTTPEA</sequence>
<gene>
    <name evidence="16" type="primary">Slc26a5</name>
    <name type="synonym">Pres</name>
</gene>